<sequence>MKNQLIDRLTRYTTIDTQSDPKSTTTPSTEKQWDLLHLLEKELQQLGLPTDLDENGYLFATLESNIDADVPTVGFLAHVDTSPDFNASNVKPQIIENYDGKPYKLGNTKRVLDPKVFPELNSLVGHTLMVTDGTSLLGADDKAGIVEIMEAICYLQEHPEIKHGTIRIGFTPDEEIGRGPHKFDVDRFNADFAYTMDGSQYGELQYESFNAAEAVITCHGVNVHPGSAKNAMVNAIRLGEQFDSLLPDSEVPERTEGYEGFYHLMNFEGTVEKATLQYIIRDHDKKQFELRKKRILEIRDDINAHFENYPVKVDISDQYFNMAEKILPLPHIIDIPKRVFAKLDIPANTEPIRGGTDGSQLSFMGLPTPNIFTGCGNFHGPYEYASIDVMEKAVQVIIGIVEDIAENH</sequence>
<organism>
    <name type="scientific">Staphylococcus aureus (strain JH1)</name>
    <dbReference type="NCBI Taxonomy" id="359787"/>
    <lineage>
        <taxon>Bacteria</taxon>
        <taxon>Bacillati</taxon>
        <taxon>Bacillota</taxon>
        <taxon>Bacilli</taxon>
        <taxon>Bacillales</taxon>
        <taxon>Staphylococcaceae</taxon>
        <taxon>Staphylococcus</taxon>
    </lineage>
</organism>
<reference key="1">
    <citation type="submission" date="2007-06" db="EMBL/GenBank/DDBJ databases">
        <title>Complete sequence of chromosome of Staphylococcus aureus subsp. aureus JH1.</title>
        <authorList>
            <consortium name="US DOE Joint Genome Institute"/>
            <person name="Copeland A."/>
            <person name="Lucas S."/>
            <person name="Lapidus A."/>
            <person name="Barry K."/>
            <person name="Detter J.C."/>
            <person name="Glavina del Rio T."/>
            <person name="Hammon N."/>
            <person name="Israni S."/>
            <person name="Dalin E."/>
            <person name="Tice H."/>
            <person name="Pitluck S."/>
            <person name="Chain P."/>
            <person name="Malfatti S."/>
            <person name="Shin M."/>
            <person name="Vergez L."/>
            <person name="Schmutz J."/>
            <person name="Larimer F."/>
            <person name="Land M."/>
            <person name="Hauser L."/>
            <person name="Kyrpides N."/>
            <person name="Ivanova N."/>
            <person name="Tomasz A."/>
            <person name="Richardson P."/>
        </authorList>
    </citation>
    <scope>NUCLEOTIDE SEQUENCE [LARGE SCALE GENOMIC DNA]</scope>
    <source>
        <strain>JH1</strain>
    </source>
</reference>
<keyword id="KW-0031">Aminopeptidase</keyword>
<keyword id="KW-0963">Cytoplasm</keyword>
<keyword id="KW-0378">Hydrolase</keyword>
<keyword id="KW-0479">Metal-binding</keyword>
<keyword id="KW-0482">Metalloprotease</keyword>
<keyword id="KW-0645">Protease</keyword>
<keyword id="KW-0862">Zinc</keyword>
<accession>A6TZM2</accession>
<evidence type="ECO:0000255" key="1">
    <source>
        <dbReference type="HAMAP-Rule" id="MF_00550"/>
    </source>
</evidence>
<proteinExistence type="inferred from homology"/>
<gene>
    <name evidence="1" type="primary">pepT</name>
    <name type="ordered locus">SaurJH1_0784</name>
</gene>
<name>PEPT_STAA2</name>
<dbReference type="EC" id="3.4.11.4" evidence="1"/>
<dbReference type="EMBL" id="CP000736">
    <property type="protein sequence ID" value="ABR51640.1"/>
    <property type="molecule type" value="Genomic_DNA"/>
</dbReference>
<dbReference type="SMR" id="A6TZM2"/>
<dbReference type="MEROPS" id="M20.003"/>
<dbReference type="KEGG" id="sah:SaurJH1_0784"/>
<dbReference type="HOGENOM" id="CLU_053676_0_0_9"/>
<dbReference type="GO" id="GO:0005829">
    <property type="term" value="C:cytosol"/>
    <property type="evidence" value="ECO:0007669"/>
    <property type="project" value="TreeGrafter"/>
</dbReference>
<dbReference type="GO" id="GO:0008237">
    <property type="term" value="F:metallopeptidase activity"/>
    <property type="evidence" value="ECO:0007669"/>
    <property type="project" value="UniProtKB-KW"/>
</dbReference>
<dbReference type="GO" id="GO:0045148">
    <property type="term" value="F:tripeptide aminopeptidase activity"/>
    <property type="evidence" value="ECO:0007669"/>
    <property type="project" value="UniProtKB-UniRule"/>
</dbReference>
<dbReference type="GO" id="GO:0008270">
    <property type="term" value="F:zinc ion binding"/>
    <property type="evidence" value="ECO:0007669"/>
    <property type="project" value="UniProtKB-UniRule"/>
</dbReference>
<dbReference type="GO" id="GO:0043171">
    <property type="term" value="P:peptide catabolic process"/>
    <property type="evidence" value="ECO:0007669"/>
    <property type="project" value="UniProtKB-UniRule"/>
</dbReference>
<dbReference type="GO" id="GO:0006508">
    <property type="term" value="P:proteolysis"/>
    <property type="evidence" value="ECO:0007669"/>
    <property type="project" value="UniProtKB-UniRule"/>
</dbReference>
<dbReference type="CDD" id="cd03892">
    <property type="entry name" value="M20_peptT"/>
    <property type="match status" value="1"/>
</dbReference>
<dbReference type="FunFam" id="3.30.70.360:FF:000002">
    <property type="entry name" value="Peptidase T"/>
    <property type="match status" value="1"/>
</dbReference>
<dbReference type="Gene3D" id="3.30.70.360">
    <property type="match status" value="1"/>
</dbReference>
<dbReference type="Gene3D" id="3.40.630.10">
    <property type="entry name" value="Zn peptidases"/>
    <property type="match status" value="1"/>
</dbReference>
<dbReference type="HAMAP" id="MF_00550">
    <property type="entry name" value="Aminopeptidase_M20"/>
    <property type="match status" value="1"/>
</dbReference>
<dbReference type="InterPro" id="IPR001261">
    <property type="entry name" value="ArgE/DapE_CS"/>
</dbReference>
<dbReference type="InterPro" id="IPR036264">
    <property type="entry name" value="Bact_exopeptidase_dim_dom"/>
</dbReference>
<dbReference type="InterPro" id="IPR002933">
    <property type="entry name" value="Peptidase_M20"/>
</dbReference>
<dbReference type="InterPro" id="IPR011650">
    <property type="entry name" value="Peptidase_M20_dimer"/>
</dbReference>
<dbReference type="InterPro" id="IPR010161">
    <property type="entry name" value="Peptidase_M20B"/>
</dbReference>
<dbReference type="NCBIfam" id="TIGR01882">
    <property type="entry name" value="peptidase-T"/>
    <property type="match status" value="1"/>
</dbReference>
<dbReference type="NCBIfam" id="NF003976">
    <property type="entry name" value="PRK05469.1"/>
    <property type="match status" value="1"/>
</dbReference>
<dbReference type="NCBIfam" id="NF009920">
    <property type="entry name" value="PRK13381.1"/>
    <property type="match status" value="1"/>
</dbReference>
<dbReference type="PANTHER" id="PTHR42994">
    <property type="entry name" value="PEPTIDASE T"/>
    <property type="match status" value="1"/>
</dbReference>
<dbReference type="PANTHER" id="PTHR42994:SF1">
    <property type="entry name" value="PEPTIDASE T"/>
    <property type="match status" value="1"/>
</dbReference>
<dbReference type="Pfam" id="PF07687">
    <property type="entry name" value="M20_dimer"/>
    <property type="match status" value="1"/>
</dbReference>
<dbReference type="Pfam" id="PF01546">
    <property type="entry name" value="Peptidase_M20"/>
    <property type="match status" value="1"/>
</dbReference>
<dbReference type="PIRSF" id="PIRSF037215">
    <property type="entry name" value="Peptidase_M20B"/>
    <property type="match status" value="1"/>
</dbReference>
<dbReference type="SUPFAM" id="SSF55031">
    <property type="entry name" value="Bacterial exopeptidase dimerisation domain"/>
    <property type="match status" value="1"/>
</dbReference>
<dbReference type="SUPFAM" id="SSF53187">
    <property type="entry name" value="Zn-dependent exopeptidases"/>
    <property type="match status" value="1"/>
</dbReference>
<dbReference type="PROSITE" id="PS00758">
    <property type="entry name" value="ARGE_DAPE_CPG2_1"/>
    <property type="match status" value="1"/>
</dbReference>
<dbReference type="PROSITE" id="PS00759">
    <property type="entry name" value="ARGE_DAPE_CPG2_2"/>
    <property type="match status" value="1"/>
</dbReference>
<comment type="function">
    <text evidence="1">Cleaves the N-terminal amino acid of tripeptides.</text>
</comment>
<comment type="catalytic activity">
    <reaction evidence="1">
        <text>Release of the N-terminal residue from a tripeptide.</text>
        <dbReference type="EC" id="3.4.11.4"/>
    </reaction>
</comment>
<comment type="cofactor">
    <cofactor evidence="1">
        <name>Zn(2+)</name>
        <dbReference type="ChEBI" id="CHEBI:29105"/>
    </cofactor>
    <text evidence="1">Binds 2 Zn(2+) ions per subunit.</text>
</comment>
<comment type="subcellular location">
    <subcellularLocation>
        <location evidence="1">Cytoplasm</location>
    </subcellularLocation>
</comment>
<comment type="similarity">
    <text evidence="1">Belongs to the peptidase M20B family.</text>
</comment>
<protein>
    <recommendedName>
        <fullName evidence="1">Peptidase T</fullName>
        <ecNumber evidence="1">3.4.11.4</ecNumber>
    </recommendedName>
    <alternativeName>
        <fullName evidence="1">Aminotripeptidase</fullName>
        <shortName evidence="1">Tripeptidase</shortName>
    </alternativeName>
    <alternativeName>
        <fullName evidence="1">Tripeptide aminopeptidase</fullName>
    </alternativeName>
</protein>
<feature type="chain" id="PRO_1000081962" description="Peptidase T">
    <location>
        <begin position="1"/>
        <end position="408"/>
    </location>
</feature>
<feature type="active site" evidence="1">
    <location>
        <position position="80"/>
    </location>
</feature>
<feature type="active site" description="Proton acceptor" evidence="1">
    <location>
        <position position="174"/>
    </location>
</feature>
<feature type="binding site" evidence="1">
    <location>
        <position position="78"/>
    </location>
    <ligand>
        <name>Zn(2+)</name>
        <dbReference type="ChEBI" id="CHEBI:29105"/>
        <label>1</label>
    </ligand>
</feature>
<feature type="binding site" evidence="1">
    <location>
        <position position="140"/>
    </location>
    <ligand>
        <name>Zn(2+)</name>
        <dbReference type="ChEBI" id="CHEBI:29105"/>
        <label>1</label>
    </ligand>
</feature>
<feature type="binding site" evidence="1">
    <location>
        <position position="140"/>
    </location>
    <ligand>
        <name>Zn(2+)</name>
        <dbReference type="ChEBI" id="CHEBI:29105"/>
        <label>2</label>
    </ligand>
</feature>
<feature type="binding site" evidence="1">
    <location>
        <position position="175"/>
    </location>
    <ligand>
        <name>Zn(2+)</name>
        <dbReference type="ChEBI" id="CHEBI:29105"/>
        <label>2</label>
    </ligand>
</feature>
<feature type="binding site" evidence="1">
    <location>
        <position position="197"/>
    </location>
    <ligand>
        <name>Zn(2+)</name>
        <dbReference type="ChEBI" id="CHEBI:29105"/>
        <label>1</label>
    </ligand>
</feature>
<feature type="binding site" evidence="1">
    <location>
        <position position="379"/>
    </location>
    <ligand>
        <name>Zn(2+)</name>
        <dbReference type="ChEBI" id="CHEBI:29105"/>
        <label>2</label>
    </ligand>
</feature>